<protein>
    <recommendedName>
        <fullName evidence="1">Protein-export protein SecB</fullName>
    </recommendedName>
</protein>
<feature type="chain" id="PRO_1000083861" description="Protein-export protein SecB">
    <location>
        <begin position="1"/>
        <end position="147"/>
    </location>
</feature>
<reference key="1">
    <citation type="journal article" date="2008" name="Genomics">
        <title>Characterization of ST-4821 complex, a unique Neisseria meningitidis clone.</title>
        <authorList>
            <person name="Peng J."/>
            <person name="Yang L."/>
            <person name="Yang F."/>
            <person name="Yang J."/>
            <person name="Yan Y."/>
            <person name="Nie H."/>
            <person name="Zhang X."/>
            <person name="Xiong Z."/>
            <person name="Jiang Y."/>
            <person name="Cheng F."/>
            <person name="Xu X."/>
            <person name="Chen S."/>
            <person name="Sun L."/>
            <person name="Li W."/>
            <person name="Shen Y."/>
            <person name="Shao Z."/>
            <person name="Liang X."/>
            <person name="Xu J."/>
            <person name="Jin Q."/>
        </authorList>
    </citation>
    <scope>NUCLEOTIDE SEQUENCE [LARGE SCALE GENOMIC DNA]</scope>
    <source>
        <strain>053442</strain>
    </source>
</reference>
<gene>
    <name evidence="1" type="primary">secB</name>
    <name type="ordered locus">NMCC_0437</name>
</gene>
<comment type="function">
    <text evidence="1">One of the proteins required for the normal export of preproteins out of the cell cytoplasm. It is a molecular chaperone that binds to a subset of precursor proteins, maintaining them in a translocation-competent state. It also specifically binds to its receptor SecA.</text>
</comment>
<comment type="subunit">
    <text evidence="1">Homotetramer, a dimer of dimers. One homotetramer interacts with 1 SecA dimer.</text>
</comment>
<comment type="subcellular location">
    <subcellularLocation>
        <location evidence="1">Cytoplasm</location>
    </subcellularLocation>
</comment>
<comment type="similarity">
    <text evidence="1">Belongs to the SecB family.</text>
</comment>
<name>SECB_NEIM0</name>
<proteinExistence type="inferred from homology"/>
<dbReference type="EMBL" id="CP000381">
    <property type="protein sequence ID" value="ABX72642.1"/>
    <property type="molecule type" value="Genomic_DNA"/>
</dbReference>
<dbReference type="RefSeq" id="WP_002214461.1">
    <property type="nucleotide sequence ID" value="NC_010120.1"/>
</dbReference>
<dbReference type="SMR" id="A9M1W7"/>
<dbReference type="KEGG" id="nmn:NMCC_0437"/>
<dbReference type="HOGENOM" id="CLU_111574_1_0_4"/>
<dbReference type="Proteomes" id="UP000001177">
    <property type="component" value="Chromosome"/>
</dbReference>
<dbReference type="GO" id="GO:0005737">
    <property type="term" value="C:cytoplasm"/>
    <property type="evidence" value="ECO:0007669"/>
    <property type="project" value="UniProtKB-SubCell"/>
</dbReference>
<dbReference type="GO" id="GO:0051082">
    <property type="term" value="F:unfolded protein binding"/>
    <property type="evidence" value="ECO:0007669"/>
    <property type="project" value="InterPro"/>
</dbReference>
<dbReference type="GO" id="GO:0006457">
    <property type="term" value="P:protein folding"/>
    <property type="evidence" value="ECO:0007669"/>
    <property type="project" value="UniProtKB-UniRule"/>
</dbReference>
<dbReference type="GO" id="GO:0051262">
    <property type="term" value="P:protein tetramerization"/>
    <property type="evidence" value="ECO:0007669"/>
    <property type="project" value="InterPro"/>
</dbReference>
<dbReference type="GO" id="GO:0015031">
    <property type="term" value="P:protein transport"/>
    <property type="evidence" value="ECO:0007669"/>
    <property type="project" value="UniProtKB-UniRule"/>
</dbReference>
<dbReference type="Gene3D" id="3.10.420.10">
    <property type="entry name" value="SecB-like"/>
    <property type="match status" value="1"/>
</dbReference>
<dbReference type="HAMAP" id="MF_00821">
    <property type="entry name" value="SecB"/>
    <property type="match status" value="1"/>
</dbReference>
<dbReference type="InterPro" id="IPR003708">
    <property type="entry name" value="SecB"/>
</dbReference>
<dbReference type="InterPro" id="IPR035958">
    <property type="entry name" value="SecB-like_sf"/>
</dbReference>
<dbReference type="NCBIfam" id="NF004394">
    <property type="entry name" value="PRK05751.1-5"/>
    <property type="match status" value="1"/>
</dbReference>
<dbReference type="NCBIfam" id="TIGR00809">
    <property type="entry name" value="secB"/>
    <property type="match status" value="1"/>
</dbReference>
<dbReference type="PANTHER" id="PTHR36918">
    <property type="match status" value="1"/>
</dbReference>
<dbReference type="PANTHER" id="PTHR36918:SF1">
    <property type="entry name" value="PROTEIN-EXPORT PROTEIN SECB"/>
    <property type="match status" value="1"/>
</dbReference>
<dbReference type="Pfam" id="PF02556">
    <property type="entry name" value="SecB"/>
    <property type="match status" value="1"/>
</dbReference>
<dbReference type="PRINTS" id="PR01594">
    <property type="entry name" value="SECBCHAPRONE"/>
</dbReference>
<dbReference type="SUPFAM" id="SSF54611">
    <property type="entry name" value="SecB-like"/>
    <property type="match status" value="1"/>
</dbReference>
<evidence type="ECO:0000255" key="1">
    <source>
        <dbReference type="HAMAP-Rule" id="MF_00821"/>
    </source>
</evidence>
<keyword id="KW-0143">Chaperone</keyword>
<keyword id="KW-0963">Cytoplasm</keyword>
<keyword id="KW-0653">Protein transport</keyword>
<keyword id="KW-0811">Translocation</keyword>
<keyword id="KW-0813">Transport</keyword>
<sequence>MSEELQPVFSIERLYVKDLSLEVPHAPQIFLEQGEPEVDMRVSTGSQKLEDGYYNVDVTVTVTAKLDNERTMFLNEVTQSGIFRLENIPEEDVQLLLGVACPNILFPYAREAVSGTVTRAGFPPVLLAPINFEAIYQQQQEAEAAGA</sequence>
<organism>
    <name type="scientific">Neisseria meningitidis serogroup C (strain 053442)</name>
    <dbReference type="NCBI Taxonomy" id="374833"/>
    <lineage>
        <taxon>Bacteria</taxon>
        <taxon>Pseudomonadati</taxon>
        <taxon>Pseudomonadota</taxon>
        <taxon>Betaproteobacteria</taxon>
        <taxon>Neisseriales</taxon>
        <taxon>Neisseriaceae</taxon>
        <taxon>Neisseria</taxon>
    </lineage>
</organism>
<accession>A9M1W7</accession>